<reference key="1">
    <citation type="journal article" date="2002" name="J. Immunol.">
        <title>Conservation and variation in human and common chimpanzee CD94 and NKG2 genes.</title>
        <authorList>
            <person name="Shum B.P."/>
            <person name="Flodin L.R."/>
            <person name="Muir D.G."/>
            <person name="Rajalingam R."/>
            <person name="Khakoo S.I."/>
            <person name="Cleland S."/>
            <person name="Guethlein L.A."/>
            <person name="Uhrberg M."/>
            <person name="Parham P."/>
        </authorList>
    </citation>
    <scope>NUCLEOTIDE SEQUENCE [MRNA]</scope>
    <scope>VARIANTS</scope>
</reference>
<gene>
    <name type="primary">KLRC4</name>
    <name type="synonym">NKG2F</name>
</gene>
<protein>
    <recommendedName>
        <fullName>NKG2-F type II integral membrane protein</fullName>
    </recommendedName>
    <alternativeName>
        <fullName>NK cell receptor F</fullName>
    </alternativeName>
    <alternativeName>
        <fullName>NKG2-F-activating NK receptor</fullName>
    </alternativeName>
</protein>
<sequence length="158" mass="18034">MNKQRGTYSEVSLAQDPKRQQRKLKGNKSSISGTKQEIFQVELNLQNASSDHQGNDKTYHCKGLLPPPERLTAEVLGIICIVLMATVLKTIVLIPCIGVLEQNNFSLNRRMQKACDCGHCPEEWITYSNSCYYIGKERRTWEEGVCWPVLQRTLICFL</sequence>
<evidence type="ECO:0000255" key="1"/>
<evidence type="ECO:0000256" key="2">
    <source>
        <dbReference type="SAM" id="MobiDB-lite"/>
    </source>
</evidence>
<feature type="chain" id="PRO_0000046674" description="NKG2-F type II integral membrane protein">
    <location>
        <begin position="1"/>
        <end position="158"/>
    </location>
</feature>
<feature type="topological domain" description="Cytoplasmic" evidence="1">
    <location>
        <begin position="1"/>
        <end position="74"/>
    </location>
</feature>
<feature type="transmembrane region" description="Helical" evidence="1">
    <location>
        <begin position="75"/>
        <end position="95"/>
    </location>
</feature>
<feature type="topological domain" description="Extracellular" evidence="1">
    <location>
        <begin position="96"/>
        <end position="158"/>
    </location>
</feature>
<feature type="region of interest" description="Disordered" evidence="2">
    <location>
        <begin position="1"/>
        <end position="30"/>
    </location>
</feature>
<feature type="compositionally biased region" description="Polar residues" evidence="2">
    <location>
        <begin position="1"/>
        <end position="12"/>
    </location>
</feature>
<feature type="sequence variant" id="VAR_018703" description="In allele NKG2-F*02.">
    <original>T</original>
    <variation>I</variation>
    <location>
        <position position="7"/>
    </location>
</feature>
<feature type="sequence variant" id="VAR_018704" description="In allele NKG2-F*02.">
    <original>R</original>
    <variation>K</variation>
    <location>
        <position position="22"/>
    </location>
</feature>
<feature type="sequence variant" id="VAR_018705" description="In allele NKG2-F*02, allele NKG2-F*04 and allele NKG2-F*05.">
    <original>K</original>
    <variation>E</variation>
    <location>
        <position position="35"/>
    </location>
</feature>
<feature type="sequence variant" id="VAR_018706" description="In allele NKG2-F*02, allele NKG2-F*04 and allele NKG2-F*05.">
    <original>R</original>
    <variation>K</variation>
    <location>
        <position position="70"/>
    </location>
</feature>
<feature type="sequence variant" id="VAR_018707" description="In allele NKG2-F*04.">
    <original>T</original>
    <variation>I</variation>
    <location>
        <position position="90"/>
    </location>
</feature>
<feature type="sequence variant" id="VAR_018708" description="In allele NKG2-F*02.">
    <original>H</original>
    <variation>R</variation>
    <location>
        <position position="119"/>
    </location>
</feature>
<feature type="sequence variant" id="VAR_018709" description="In allele NKG2-F*04 and allele NKG2-F*05.">
    <original>T</original>
    <variation>I</variation>
    <location>
        <position position="126"/>
    </location>
</feature>
<feature type="sequence variant" id="VAR_018710" description="In allele NKG2-F*02, allele NKG2-F*04 and allele NKG2-F*05.">
    <original>G</original>
    <variation>R</variation>
    <location>
        <position position="144"/>
    </location>
</feature>
<feature type="sequence variant" id="VAR_018711" description="In allele NKG2-F*02, allele NKG2-F*03, allele NKG2-F*04 and allele NKG2-F*05.">
    <original>Q</original>
    <variation>R</variation>
    <location>
        <position position="151"/>
    </location>
</feature>
<keyword id="KW-1015">Disulfide bond</keyword>
<keyword id="KW-0472">Membrane</keyword>
<keyword id="KW-0675">Receptor</keyword>
<keyword id="KW-1185">Reference proteome</keyword>
<keyword id="KW-0735">Signal-anchor</keyword>
<keyword id="KW-0812">Transmembrane</keyword>
<keyword id="KW-1133">Transmembrane helix</keyword>
<proteinExistence type="evidence at transcript level"/>
<name>NKG2F_PANTR</name>
<comment type="function">
    <text>May play a role as a receptor for the recognition of MHC class I HLA-E molecules by NK cells.</text>
</comment>
<comment type="subunit">
    <text>Can form disulfide-bonded heterodimer with CD94.</text>
</comment>
<comment type="subcellular location">
    <subcellularLocation>
        <location>Membrane</location>
        <topology>Single-pass type II membrane protein</topology>
    </subcellularLocation>
</comment>
<comment type="tissue specificity">
    <text>Natural killer cells.</text>
</comment>
<accession>Q95MI1</accession>
<accession>Q95MH7</accession>
<accession>Q95MH8</accession>
<accession>Q95MH9</accession>
<accession>Q95MI0</accession>
<dbReference type="EMBL" id="AF350011">
    <property type="protein sequence ID" value="AAK83798.1"/>
    <property type="molecule type" value="mRNA"/>
</dbReference>
<dbReference type="EMBL" id="AF350012">
    <property type="protein sequence ID" value="AAK83799.1"/>
    <property type="molecule type" value="mRNA"/>
</dbReference>
<dbReference type="EMBL" id="AF350013">
    <property type="protein sequence ID" value="AAK83800.1"/>
    <property type="molecule type" value="mRNA"/>
</dbReference>
<dbReference type="EMBL" id="AF350014">
    <property type="protein sequence ID" value="AAK83801.1"/>
    <property type="molecule type" value="mRNA"/>
</dbReference>
<dbReference type="EMBL" id="AF350015">
    <property type="protein sequence ID" value="AAK83802.1"/>
    <property type="molecule type" value="mRNA"/>
</dbReference>
<dbReference type="RefSeq" id="NP_001009053.1">
    <property type="nucleotide sequence ID" value="NM_001009053.1"/>
</dbReference>
<dbReference type="RefSeq" id="XP_016778007.1">
    <property type="nucleotide sequence ID" value="XM_016922518.1"/>
</dbReference>
<dbReference type="RefSeq" id="XP_063640799.1">
    <property type="nucleotide sequence ID" value="XM_063784729.1"/>
</dbReference>
<dbReference type="SMR" id="Q95MI1"/>
<dbReference type="FunCoup" id="Q95MI1">
    <property type="interactions" value="69"/>
</dbReference>
<dbReference type="STRING" id="9598.ENSPTRP00000054758"/>
<dbReference type="PaxDb" id="9598-ENSPTRP00000055213"/>
<dbReference type="GeneID" id="450145"/>
<dbReference type="CTD" id="8302"/>
<dbReference type="eggNOG" id="ENOG502S6IE">
    <property type="taxonomic scope" value="Eukaryota"/>
</dbReference>
<dbReference type="InParanoid" id="Q95MI1"/>
<dbReference type="Proteomes" id="UP000002277">
    <property type="component" value="Unplaced"/>
</dbReference>
<dbReference type="GO" id="GO:0009897">
    <property type="term" value="C:external side of plasma membrane"/>
    <property type="evidence" value="ECO:0000318"/>
    <property type="project" value="GO_Central"/>
</dbReference>
<dbReference type="GO" id="GO:0004888">
    <property type="term" value="F:transmembrane signaling receptor activity"/>
    <property type="evidence" value="ECO:0000318"/>
    <property type="project" value="GO_Central"/>
</dbReference>
<dbReference type="GO" id="GO:0045954">
    <property type="term" value="P:positive regulation of natural killer cell mediated cytotoxicity"/>
    <property type="evidence" value="ECO:0000318"/>
    <property type="project" value="GO_Central"/>
</dbReference>
<dbReference type="GO" id="GO:0002223">
    <property type="term" value="P:stimulatory C-type lectin receptor signaling pathway"/>
    <property type="evidence" value="ECO:0000318"/>
    <property type="project" value="GO_Central"/>
</dbReference>
<dbReference type="Gene3D" id="3.10.100.10">
    <property type="entry name" value="Mannose-Binding Protein A, subunit A"/>
    <property type="match status" value="1"/>
</dbReference>
<dbReference type="Gene3D" id="1.10.287.770">
    <property type="entry name" value="YojJ-like"/>
    <property type="match status" value="1"/>
</dbReference>
<dbReference type="InterPro" id="IPR016186">
    <property type="entry name" value="C-type_lectin-like/link_sf"/>
</dbReference>
<dbReference type="InterPro" id="IPR016187">
    <property type="entry name" value="CTDL_fold"/>
</dbReference>
<dbReference type="InterPro" id="IPR050919">
    <property type="entry name" value="NKG2/CD94_NK_receptors"/>
</dbReference>
<dbReference type="PANTHER" id="PTHR22800">
    <property type="entry name" value="C-TYPE LECTIN PROTEINS"/>
    <property type="match status" value="1"/>
</dbReference>
<dbReference type="PANTHER" id="PTHR22800:SF185">
    <property type="entry name" value="NKG2-F TYPE II INTEGRAL MEMBRANE PROTEIN"/>
    <property type="match status" value="1"/>
</dbReference>
<dbReference type="SUPFAM" id="SSF56436">
    <property type="entry name" value="C-type lectin-like"/>
    <property type="match status" value="1"/>
</dbReference>
<organism>
    <name type="scientific">Pan troglodytes</name>
    <name type="common">Chimpanzee</name>
    <dbReference type="NCBI Taxonomy" id="9598"/>
    <lineage>
        <taxon>Eukaryota</taxon>
        <taxon>Metazoa</taxon>
        <taxon>Chordata</taxon>
        <taxon>Craniata</taxon>
        <taxon>Vertebrata</taxon>
        <taxon>Euteleostomi</taxon>
        <taxon>Mammalia</taxon>
        <taxon>Eutheria</taxon>
        <taxon>Euarchontoglires</taxon>
        <taxon>Primates</taxon>
        <taxon>Haplorrhini</taxon>
        <taxon>Catarrhini</taxon>
        <taxon>Hominidae</taxon>
        <taxon>Pan</taxon>
    </lineage>
</organism>